<accession>C9JQL5</accession>
<comment type="subcellular location">
    <subcellularLocation>
        <location evidence="3">Membrane</location>
        <topology evidence="3">Multi-pass membrane protein</topology>
    </subcellularLocation>
</comment>
<comment type="similarity">
    <text evidence="3">Belongs to the CD225/Dispanin family.</text>
</comment>
<comment type="caution">
    <text evidence="3">Could be the product of a pseudogene.</text>
</comment>
<protein>
    <recommendedName>
        <fullName>Putative dispanin subfamily A member 2d</fullName>
        <shortName>DSPA2d</shortName>
    </recommendedName>
</protein>
<sequence length="133" mass="14796">MNHTVQTFFSPVNSGQPPNYEMLKEEHKVAVLGVPHNPAPPTSTVIHIRSKTSVPHHVVWSLFNTLFMNPCCLGFIAFAYSVKSRDRKMVGNVTGAQAYASTTKCLNIWALILGILMTILLIIIPVLIFQAHR</sequence>
<feature type="chain" id="PRO_0000417983" description="Putative dispanin subfamily A member 2d">
    <location>
        <begin position="1"/>
        <end position="133"/>
    </location>
</feature>
<feature type="topological domain" description="Extracellular" evidence="2">
    <location>
        <begin position="1"/>
        <end position="57"/>
    </location>
</feature>
<feature type="transmembrane region" description="Helical" evidence="2">
    <location>
        <begin position="58"/>
        <end position="78"/>
    </location>
</feature>
<feature type="topological domain" description="Cytoplasmic" evidence="2">
    <location>
        <begin position="79"/>
        <end position="107"/>
    </location>
</feature>
<feature type="transmembrane region" description="Helical" evidence="2">
    <location>
        <begin position="108"/>
        <end position="128"/>
    </location>
</feature>
<feature type="topological domain" description="Extracellular" evidence="2">
    <location>
        <begin position="129"/>
        <end position="133"/>
    </location>
</feature>
<feature type="cross-link" description="Glycyl lysine isopeptide (Lys-Gly) (interchain with G-Cter in ubiquitin)" evidence="1">
    <location>
        <position position="24"/>
    </location>
</feature>
<feature type="cross-link" description="Glycyl lysine isopeptide (Lys-Gly) (interchain with G-Cter in ubiquitin)" evidence="1">
    <location>
        <position position="83"/>
    </location>
</feature>
<feature type="cross-link" description="Glycyl lysine isopeptide (Lys-Gly) (interchain with G-Cter in ubiquitin)" evidence="1">
    <location>
        <position position="88"/>
    </location>
</feature>
<feature type="cross-link" description="Glycyl lysine isopeptide (Lys-Gly) (interchain with G-Cter in ubiquitin)" evidence="1">
    <location>
        <position position="104"/>
    </location>
</feature>
<proteinExistence type="uncertain"/>
<name>DSA2D_HUMAN</name>
<keyword id="KW-1017">Isopeptide bond</keyword>
<keyword id="KW-0472">Membrane</keyword>
<keyword id="KW-1267">Proteomics identification</keyword>
<keyword id="KW-1185">Reference proteome</keyword>
<keyword id="KW-0812">Transmembrane</keyword>
<keyword id="KW-1133">Transmembrane helix</keyword>
<keyword id="KW-0832">Ubl conjugation</keyword>
<dbReference type="EMBL" id="AC023157">
    <property type="status" value="NOT_ANNOTATED_CDS"/>
    <property type="molecule type" value="Genomic_DNA"/>
</dbReference>
<dbReference type="FunCoup" id="C9JQL5">
    <property type="interactions" value="823"/>
</dbReference>
<dbReference type="GlyGen" id="C9JQL5">
    <property type="glycosylation" value="1 site, 1 O-linked glycan (1 site)"/>
</dbReference>
<dbReference type="SwissPalm" id="C9JQL5"/>
<dbReference type="BioMuta" id="-"/>
<dbReference type="jPOST" id="C9JQL5"/>
<dbReference type="MassIVE" id="C9JQL5"/>
<dbReference type="TopDownProteomics" id="C9JQL5"/>
<dbReference type="neXtProt" id="NX_C9JQL5"/>
<dbReference type="GeneTree" id="ENSGT00950000182857"/>
<dbReference type="InParanoid" id="C9JQL5"/>
<dbReference type="PAN-GO" id="C9JQL5">
    <property type="GO annotations" value="8 GO annotations based on evolutionary models"/>
</dbReference>
<dbReference type="PhylomeDB" id="C9JQL5"/>
<dbReference type="Pharos" id="C9JQL5">
    <property type="development level" value="Tdark"/>
</dbReference>
<dbReference type="Proteomes" id="UP000005640">
    <property type="component" value="Unplaced"/>
</dbReference>
<dbReference type="RNAct" id="C9JQL5">
    <property type="molecule type" value="protein"/>
</dbReference>
<dbReference type="GO" id="GO:0005886">
    <property type="term" value="C:plasma membrane"/>
    <property type="evidence" value="ECO:0000318"/>
    <property type="project" value="GO_Central"/>
</dbReference>
<dbReference type="GO" id="GO:0051607">
    <property type="term" value="P:defense response to virus"/>
    <property type="evidence" value="ECO:0000318"/>
    <property type="project" value="GO_Central"/>
</dbReference>
<dbReference type="GO" id="GO:0046597">
    <property type="term" value="P:host-mediated suppression of symbiont invasion"/>
    <property type="evidence" value="ECO:0000318"/>
    <property type="project" value="GO_Central"/>
</dbReference>
<dbReference type="GO" id="GO:0045071">
    <property type="term" value="P:negative regulation of viral genome replication"/>
    <property type="evidence" value="ECO:0000318"/>
    <property type="project" value="GO_Central"/>
</dbReference>
<dbReference type="GO" id="GO:0035455">
    <property type="term" value="P:response to interferon-alpha"/>
    <property type="evidence" value="ECO:0000318"/>
    <property type="project" value="GO_Central"/>
</dbReference>
<dbReference type="GO" id="GO:0035456">
    <property type="term" value="P:response to interferon-beta"/>
    <property type="evidence" value="ECO:0000318"/>
    <property type="project" value="GO_Central"/>
</dbReference>
<dbReference type="GO" id="GO:0034341">
    <property type="term" value="P:response to type II interferon"/>
    <property type="evidence" value="ECO:0000318"/>
    <property type="project" value="GO_Central"/>
</dbReference>
<dbReference type="GO" id="GO:0060337">
    <property type="term" value="P:type I interferon-mediated signaling pathway"/>
    <property type="evidence" value="ECO:0000318"/>
    <property type="project" value="GO_Central"/>
</dbReference>
<dbReference type="InterPro" id="IPR007593">
    <property type="entry name" value="CD225/Dispanin_fam"/>
</dbReference>
<dbReference type="InterPro" id="IPR051517">
    <property type="entry name" value="IFITM_antiviral_protein"/>
</dbReference>
<dbReference type="PANTHER" id="PTHR13999:SF23">
    <property type="entry name" value="DISPANIN SUBFAMILY A MEMBER 2D-RELATED"/>
    <property type="match status" value="1"/>
</dbReference>
<dbReference type="PANTHER" id="PTHR13999">
    <property type="entry name" value="INTERFERON INDUCIBLE TRANSMEMBRANE PROTEIN"/>
    <property type="match status" value="1"/>
</dbReference>
<dbReference type="Pfam" id="PF04505">
    <property type="entry name" value="CD225"/>
    <property type="match status" value="1"/>
</dbReference>
<evidence type="ECO:0000250" key="1">
    <source>
        <dbReference type="UniProtKB" id="Q01628"/>
    </source>
</evidence>
<evidence type="ECO:0000255" key="2"/>
<evidence type="ECO:0000305" key="3"/>
<reference key="1">
    <citation type="journal article" date="2006" name="Nature">
        <title>The finished DNA sequence of human chromosome 12.</title>
        <authorList>
            <person name="Scherer S.E."/>
            <person name="Muzny D.M."/>
            <person name="Buhay C.J."/>
            <person name="Chen R."/>
            <person name="Cree A."/>
            <person name="Ding Y."/>
            <person name="Dugan-Rocha S."/>
            <person name="Gill R."/>
            <person name="Gunaratne P."/>
            <person name="Harris R.A."/>
            <person name="Hawes A.C."/>
            <person name="Hernandez J."/>
            <person name="Hodgson A.V."/>
            <person name="Hume J."/>
            <person name="Jackson A."/>
            <person name="Khan Z.M."/>
            <person name="Kovar-Smith C."/>
            <person name="Lewis L.R."/>
            <person name="Lozado R.J."/>
            <person name="Metzker M.L."/>
            <person name="Milosavljevic A."/>
            <person name="Miner G.R."/>
            <person name="Montgomery K.T."/>
            <person name="Morgan M.B."/>
            <person name="Nazareth L.V."/>
            <person name="Scott G."/>
            <person name="Sodergren E."/>
            <person name="Song X.-Z."/>
            <person name="Steffen D."/>
            <person name="Lovering R.C."/>
            <person name="Wheeler D.A."/>
            <person name="Worley K.C."/>
            <person name="Yuan Y."/>
            <person name="Zhang Z."/>
            <person name="Adams C.Q."/>
            <person name="Ansari-Lari M.A."/>
            <person name="Ayele M."/>
            <person name="Brown M.J."/>
            <person name="Chen G."/>
            <person name="Chen Z."/>
            <person name="Clerc-Blankenburg K.P."/>
            <person name="Davis C."/>
            <person name="Delgado O."/>
            <person name="Dinh H.H."/>
            <person name="Draper H."/>
            <person name="Gonzalez-Garay M.L."/>
            <person name="Havlak P."/>
            <person name="Jackson L.R."/>
            <person name="Jacob L.S."/>
            <person name="Kelly S.H."/>
            <person name="Li L."/>
            <person name="Li Z."/>
            <person name="Liu J."/>
            <person name="Liu W."/>
            <person name="Lu J."/>
            <person name="Maheshwari M."/>
            <person name="Nguyen B.-V."/>
            <person name="Okwuonu G.O."/>
            <person name="Pasternak S."/>
            <person name="Perez L.M."/>
            <person name="Plopper F.J.H."/>
            <person name="Santibanez J."/>
            <person name="Shen H."/>
            <person name="Tabor P.E."/>
            <person name="Verduzco D."/>
            <person name="Waldron L."/>
            <person name="Wang Q."/>
            <person name="Williams G.A."/>
            <person name="Zhang J."/>
            <person name="Zhou J."/>
            <person name="Allen C.C."/>
            <person name="Amin A.G."/>
            <person name="Anyalebechi V."/>
            <person name="Bailey M."/>
            <person name="Barbaria J.A."/>
            <person name="Bimage K.E."/>
            <person name="Bryant N.P."/>
            <person name="Burch P.E."/>
            <person name="Burkett C.E."/>
            <person name="Burrell K.L."/>
            <person name="Calderon E."/>
            <person name="Cardenas V."/>
            <person name="Carter K."/>
            <person name="Casias K."/>
            <person name="Cavazos I."/>
            <person name="Cavazos S.R."/>
            <person name="Ceasar H."/>
            <person name="Chacko J."/>
            <person name="Chan S.N."/>
            <person name="Chavez D."/>
            <person name="Christopoulos C."/>
            <person name="Chu J."/>
            <person name="Cockrell R."/>
            <person name="Cox C.D."/>
            <person name="Dang M."/>
            <person name="Dathorne S.R."/>
            <person name="David R."/>
            <person name="Davis C.M."/>
            <person name="Davy-Carroll L."/>
            <person name="Deshazo D.R."/>
            <person name="Donlin J.E."/>
            <person name="D'Souza L."/>
            <person name="Eaves K.A."/>
            <person name="Egan A."/>
            <person name="Emery-Cohen A.J."/>
            <person name="Escotto M."/>
            <person name="Flagg N."/>
            <person name="Forbes L.D."/>
            <person name="Gabisi A.M."/>
            <person name="Garza M."/>
            <person name="Hamilton C."/>
            <person name="Henderson N."/>
            <person name="Hernandez O."/>
            <person name="Hines S."/>
            <person name="Hogues M.E."/>
            <person name="Huang M."/>
            <person name="Idlebird D.G."/>
            <person name="Johnson R."/>
            <person name="Jolivet A."/>
            <person name="Jones S."/>
            <person name="Kagan R."/>
            <person name="King L.M."/>
            <person name="Leal B."/>
            <person name="Lebow H."/>
            <person name="Lee S."/>
            <person name="LeVan J.M."/>
            <person name="Lewis L.C."/>
            <person name="London P."/>
            <person name="Lorensuhewa L.M."/>
            <person name="Loulseged H."/>
            <person name="Lovett D.A."/>
            <person name="Lucier A."/>
            <person name="Lucier R.L."/>
            <person name="Ma J."/>
            <person name="Madu R.C."/>
            <person name="Mapua P."/>
            <person name="Martindale A.D."/>
            <person name="Martinez E."/>
            <person name="Massey E."/>
            <person name="Mawhiney S."/>
            <person name="Meador M.G."/>
            <person name="Mendez S."/>
            <person name="Mercado C."/>
            <person name="Mercado I.C."/>
            <person name="Merritt C.E."/>
            <person name="Miner Z.L."/>
            <person name="Minja E."/>
            <person name="Mitchell T."/>
            <person name="Mohabbat F."/>
            <person name="Mohabbat K."/>
            <person name="Montgomery B."/>
            <person name="Moore N."/>
            <person name="Morris S."/>
            <person name="Munidasa M."/>
            <person name="Ngo R.N."/>
            <person name="Nguyen N.B."/>
            <person name="Nickerson E."/>
            <person name="Nwaokelemeh O.O."/>
            <person name="Nwokenkwo S."/>
            <person name="Obregon M."/>
            <person name="Oguh M."/>
            <person name="Oragunye N."/>
            <person name="Oviedo R.J."/>
            <person name="Parish B.J."/>
            <person name="Parker D.N."/>
            <person name="Parrish J."/>
            <person name="Parks K.L."/>
            <person name="Paul H.A."/>
            <person name="Payton B.A."/>
            <person name="Perez A."/>
            <person name="Perrin W."/>
            <person name="Pickens A."/>
            <person name="Primus E.L."/>
            <person name="Pu L.-L."/>
            <person name="Puazo M."/>
            <person name="Quiles M.M."/>
            <person name="Quiroz J.B."/>
            <person name="Rabata D."/>
            <person name="Reeves K."/>
            <person name="Ruiz S.J."/>
            <person name="Shao H."/>
            <person name="Sisson I."/>
            <person name="Sonaike T."/>
            <person name="Sorelle R.P."/>
            <person name="Sutton A.E."/>
            <person name="Svatek A.F."/>
            <person name="Svetz L.A."/>
            <person name="Tamerisa K.S."/>
            <person name="Taylor T.R."/>
            <person name="Teague B."/>
            <person name="Thomas N."/>
            <person name="Thorn R.D."/>
            <person name="Trejos Z.Y."/>
            <person name="Trevino B.K."/>
            <person name="Ukegbu O.N."/>
            <person name="Urban J.B."/>
            <person name="Vasquez L.I."/>
            <person name="Vera V.A."/>
            <person name="Villasana D.M."/>
            <person name="Wang L."/>
            <person name="Ward-Moore S."/>
            <person name="Warren J.T."/>
            <person name="Wei X."/>
            <person name="White F."/>
            <person name="Williamson A.L."/>
            <person name="Wleczyk R."/>
            <person name="Wooden H.S."/>
            <person name="Wooden S.H."/>
            <person name="Yen J."/>
            <person name="Yoon L."/>
            <person name="Yoon V."/>
            <person name="Zorrilla S.E."/>
            <person name="Nelson D."/>
            <person name="Kucherlapati R."/>
            <person name="Weinstock G."/>
            <person name="Gibbs R.A."/>
        </authorList>
    </citation>
    <scope>NUCLEOTIDE SEQUENCE [LARGE SCALE GENOMIC DNA]</scope>
</reference>
<reference key="2">
    <citation type="journal article" date="2012" name="PLoS ONE">
        <title>The dispanins: a novel gene family of ancient origin that contains 14 human members.</title>
        <authorList>
            <person name="Sallman Almen M."/>
            <person name="Bringeland N."/>
            <person name="Fredriksson R."/>
            <person name="Schioth H.B."/>
        </authorList>
    </citation>
    <scope>IDENTIFICATION</scope>
    <scope>GENE FAMILY</scope>
</reference>
<organism>
    <name type="scientific">Homo sapiens</name>
    <name type="common">Human</name>
    <dbReference type="NCBI Taxonomy" id="9606"/>
    <lineage>
        <taxon>Eukaryota</taxon>
        <taxon>Metazoa</taxon>
        <taxon>Chordata</taxon>
        <taxon>Craniata</taxon>
        <taxon>Vertebrata</taxon>
        <taxon>Euteleostomi</taxon>
        <taxon>Mammalia</taxon>
        <taxon>Eutheria</taxon>
        <taxon>Euarchontoglires</taxon>
        <taxon>Primates</taxon>
        <taxon>Haplorrhini</taxon>
        <taxon>Catarrhini</taxon>
        <taxon>Hominidae</taxon>
        <taxon>Homo</taxon>
    </lineage>
</organism>